<comment type="function">
    <text evidence="1">Binds as a heterodimer with protein bS6 to the central domain of the 16S rRNA, where it helps stabilize the platform of the 30S subunit.</text>
</comment>
<comment type="subunit">
    <text evidence="1">Part of the 30S ribosomal subunit. Forms a tight heterodimer with protein bS6.</text>
</comment>
<comment type="similarity">
    <text evidence="1">Belongs to the bacterial ribosomal protein bS18 family.</text>
</comment>
<dbReference type="EMBL" id="CP000962">
    <property type="protein sequence ID" value="ACA55220.1"/>
    <property type="molecule type" value="Genomic_DNA"/>
</dbReference>
<dbReference type="RefSeq" id="WP_003359407.1">
    <property type="nucleotide sequence ID" value="NC_010520.1"/>
</dbReference>
<dbReference type="SMR" id="B1KU95"/>
<dbReference type="GeneID" id="5188014"/>
<dbReference type="KEGG" id="cbl:CLK_3110"/>
<dbReference type="HOGENOM" id="CLU_148710_2_2_9"/>
<dbReference type="GO" id="GO:0022627">
    <property type="term" value="C:cytosolic small ribosomal subunit"/>
    <property type="evidence" value="ECO:0007669"/>
    <property type="project" value="TreeGrafter"/>
</dbReference>
<dbReference type="GO" id="GO:0070181">
    <property type="term" value="F:small ribosomal subunit rRNA binding"/>
    <property type="evidence" value="ECO:0007669"/>
    <property type="project" value="TreeGrafter"/>
</dbReference>
<dbReference type="GO" id="GO:0003735">
    <property type="term" value="F:structural constituent of ribosome"/>
    <property type="evidence" value="ECO:0007669"/>
    <property type="project" value="InterPro"/>
</dbReference>
<dbReference type="GO" id="GO:0006412">
    <property type="term" value="P:translation"/>
    <property type="evidence" value="ECO:0007669"/>
    <property type="project" value="UniProtKB-UniRule"/>
</dbReference>
<dbReference type="FunFam" id="4.10.640.10:FF:000004">
    <property type="entry name" value="30S ribosomal protein S18"/>
    <property type="match status" value="1"/>
</dbReference>
<dbReference type="Gene3D" id="4.10.640.10">
    <property type="entry name" value="Ribosomal protein S18"/>
    <property type="match status" value="1"/>
</dbReference>
<dbReference type="HAMAP" id="MF_00270">
    <property type="entry name" value="Ribosomal_bS18"/>
    <property type="match status" value="1"/>
</dbReference>
<dbReference type="InterPro" id="IPR001648">
    <property type="entry name" value="Ribosomal_bS18"/>
</dbReference>
<dbReference type="InterPro" id="IPR018275">
    <property type="entry name" value="Ribosomal_bS18_CS"/>
</dbReference>
<dbReference type="InterPro" id="IPR036870">
    <property type="entry name" value="Ribosomal_bS18_sf"/>
</dbReference>
<dbReference type="NCBIfam" id="TIGR00165">
    <property type="entry name" value="S18"/>
    <property type="match status" value="1"/>
</dbReference>
<dbReference type="PANTHER" id="PTHR13479">
    <property type="entry name" value="30S RIBOSOMAL PROTEIN S18"/>
    <property type="match status" value="1"/>
</dbReference>
<dbReference type="PANTHER" id="PTHR13479:SF40">
    <property type="entry name" value="SMALL RIBOSOMAL SUBUNIT PROTEIN BS18M"/>
    <property type="match status" value="1"/>
</dbReference>
<dbReference type="Pfam" id="PF01084">
    <property type="entry name" value="Ribosomal_S18"/>
    <property type="match status" value="1"/>
</dbReference>
<dbReference type="PRINTS" id="PR00974">
    <property type="entry name" value="RIBOSOMALS18"/>
</dbReference>
<dbReference type="SUPFAM" id="SSF46911">
    <property type="entry name" value="Ribosomal protein S18"/>
    <property type="match status" value="1"/>
</dbReference>
<dbReference type="PROSITE" id="PS00057">
    <property type="entry name" value="RIBOSOMAL_S18"/>
    <property type="match status" value="1"/>
</dbReference>
<keyword id="KW-0687">Ribonucleoprotein</keyword>
<keyword id="KW-0689">Ribosomal protein</keyword>
<keyword id="KW-0694">RNA-binding</keyword>
<keyword id="KW-0699">rRNA-binding</keyword>
<feature type="chain" id="PRO_1000114413" description="Small ribosomal subunit protein bS18">
    <location>
        <begin position="1"/>
        <end position="80"/>
    </location>
</feature>
<sequence>MAGREGGRRQRRTKRKVCTFCAEKSEAIDYKDINKLRKFVTERGKILPRRISGNCAKHQRELTRAIKRARNIALLPFTTE</sequence>
<proteinExistence type="inferred from homology"/>
<reference key="1">
    <citation type="journal article" date="2007" name="PLoS ONE">
        <title>Analysis of the neurotoxin complex genes in Clostridium botulinum A1-A4 and B1 strains: BoNT/A3, /Ba4 and /B1 clusters are located within plasmids.</title>
        <authorList>
            <person name="Smith T.J."/>
            <person name="Hill K.K."/>
            <person name="Foley B.T."/>
            <person name="Detter J.C."/>
            <person name="Munk A.C."/>
            <person name="Bruce D.C."/>
            <person name="Doggett N.A."/>
            <person name="Smith L.A."/>
            <person name="Marks J.D."/>
            <person name="Xie G."/>
            <person name="Brettin T.S."/>
        </authorList>
    </citation>
    <scope>NUCLEOTIDE SEQUENCE [LARGE SCALE GENOMIC DNA]</scope>
    <source>
        <strain>Loch Maree / Type A3</strain>
    </source>
</reference>
<protein>
    <recommendedName>
        <fullName evidence="1">Small ribosomal subunit protein bS18</fullName>
    </recommendedName>
    <alternativeName>
        <fullName evidence="2">30S ribosomal protein S18</fullName>
    </alternativeName>
</protein>
<gene>
    <name evidence="1" type="primary">rpsR</name>
    <name type="ordered locus">CLK_3110</name>
</gene>
<evidence type="ECO:0000255" key="1">
    <source>
        <dbReference type="HAMAP-Rule" id="MF_00270"/>
    </source>
</evidence>
<evidence type="ECO:0000305" key="2"/>
<organism>
    <name type="scientific">Clostridium botulinum (strain Loch Maree / Type A3)</name>
    <dbReference type="NCBI Taxonomy" id="498214"/>
    <lineage>
        <taxon>Bacteria</taxon>
        <taxon>Bacillati</taxon>
        <taxon>Bacillota</taxon>
        <taxon>Clostridia</taxon>
        <taxon>Eubacteriales</taxon>
        <taxon>Clostridiaceae</taxon>
        <taxon>Clostridium</taxon>
    </lineage>
</organism>
<name>RS18_CLOBM</name>
<accession>B1KU95</accession>